<accession>B1IH50</accession>
<organism>
    <name type="scientific">Clostridium botulinum (strain Okra / Type B1)</name>
    <dbReference type="NCBI Taxonomy" id="498213"/>
    <lineage>
        <taxon>Bacteria</taxon>
        <taxon>Bacillati</taxon>
        <taxon>Bacillota</taxon>
        <taxon>Clostridia</taxon>
        <taxon>Eubacteriales</taxon>
        <taxon>Clostridiaceae</taxon>
        <taxon>Clostridium</taxon>
    </lineage>
</organism>
<comment type="function">
    <text evidence="1">Involved in unsaturated fatty acids biosynthesis. Catalyzes the dehydration of short chain beta-hydroxyacyl-ACPs and long chain saturated and unsaturated beta-hydroxyacyl-ACPs.</text>
</comment>
<comment type="catalytic activity">
    <reaction evidence="1">
        <text>a (3R)-hydroxyacyl-[ACP] = a (2E)-enoyl-[ACP] + H2O</text>
        <dbReference type="Rhea" id="RHEA:13097"/>
        <dbReference type="Rhea" id="RHEA-COMP:9925"/>
        <dbReference type="Rhea" id="RHEA-COMP:9945"/>
        <dbReference type="ChEBI" id="CHEBI:15377"/>
        <dbReference type="ChEBI" id="CHEBI:78784"/>
        <dbReference type="ChEBI" id="CHEBI:78827"/>
        <dbReference type="EC" id="4.2.1.59"/>
    </reaction>
</comment>
<comment type="subcellular location">
    <subcellularLocation>
        <location evidence="1">Cytoplasm</location>
    </subcellularLocation>
</comment>
<comment type="similarity">
    <text evidence="1">Belongs to the thioester dehydratase family. FabZ subfamily.</text>
</comment>
<proteinExistence type="inferred from homology"/>
<dbReference type="EC" id="4.2.1.59" evidence="1"/>
<dbReference type="EMBL" id="CP000939">
    <property type="protein sequence ID" value="ACA46912.1"/>
    <property type="molecule type" value="Genomic_DNA"/>
</dbReference>
<dbReference type="RefSeq" id="WP_003401028.1">
    <property type="nucleotide sequence ID" value="NC_010516.1"/>
</dbReference>
<dbReference type="SMR" id="B1IH50"/>
<dbReference type="KEGG" id="cbb:CLD_0889"/>
<dbReference type="HOGENOM" id="CLU_078912_3_0_9"/>
<dbReference type="Proteomes" id="UP000008541">
    <property type="component" value="Chromosome"/>
</dbReference>
<dbReference type="GO" id="GO:0005737">
    <property type="term" value="C:cytoplasm"/>
    <property type="evidence" value="ECO:0007669"/>
    <property type="project" value="UniProtKB-SubCell"/>
</dbReference>
<dbReference type="GO" id="GO:0016020">
    <property type="term" value="C:membrane"/>
    <property type="evidence" value="ECO:0007669"/>
    <property type="project" value="GOC"/>
</dbReference>
<dbReference type="GO" id="GO:0019171">
    <property type="term" value="F:(3R)-hydroxyacyl-[acyl-carrier-protein] dehydratase activity"/>
    <property type="evidence" value="ECO:0007669"/>
    <property type="project" value="UniProtKB-EC"/>
</dbReference>
<dbReference type="GO" id="GO:0006633">
    <property type="term" value="P:fatty acid biosynthetic process"/>
    <property type="evidence" value="ECO:0007669"/>
    <property type="project" value="UniProtKB-UniRule"/>
</dbReference>
<dbReference type="GO" id="GO:0009245">
    <property type="term" value="P:lipid A biosynthetic process"/>
    <property type="evidence" value="ECO:0007669"/>
    <property type="project" value="UniProtKB-UniRule"/>
</dbReference>
<dbReference type="CDD" id="cd01288">
    <property type="entry name" value="FabZ"/>
    <property type="match status" value="1"/>
</dbReference>
<dbReference type="FunFam" id="3.10.129.10:FF:000001">
    <property type="entry name" value="3-hydroxyacyl-[acyl-carrier-protein] dehydratase FabZ"/>
    <property type="match status" value="1"/>
</dbReference>
<dbReference type="Gene3D" id="3.10.129.10">
    <property type="entry name" value="Hotdog Thioesterase"/>
    <property type="match status" value="1"/>
</dbReference>
<dbReference type="HAMAP" id="MF_00406">
    <property type="entry name" value="FabZ"/>
    <property type="match status" value="1"/>
</dbReference>
<dbReference type="InterPro" id="IPR013114">
    <property type="entry name" value="FabA_FabZ"/>
</dbReference>
<dbReference type="InterPro" id="IPR010084">
    <property type="entry name" value="FabZ"/>
</dbReference>
<dbReference type="InterPro" id="IPR029069">
    <property type="entry name" value="HotDog_dom_sf"/>
</dbReference>
<dbReference type="NCBIfam" id="TIGR01750">
    <property type="entry name" value="fabZ"/>
    <property type="match status" value="1"/>
</dbReference>
<dbReference type="NCBIfam" id="NF000582">
    <property type="entry name" value="PRK00006.1"/>
    <property type="match status" value="1"/>
</dbReference>
<dbReference type="PANTHER" id="PTHR30272">
    <property type="entry name" value="3-HYDROXYACYL-[ACYL-CARRIER-PROTEIN] DEHYDRATASE"/>
    <property type="match status" value="1"/>
</dbReference>
<dbReference type="PANTHER" id="PTHR30272:SF1">
    <property type="entry name" value="3-HYDROXYACYL-[ACYL-CARRIER-PROTEIN] DEHYDRATASE"/>
    <property type="match status" value="1"/>
</dbReference>
<dbReference type="Pfam" id="PF07977">
    <property type="entry name" value="FabA"/>
    <property type="match status" value="1"/>
</dbReference>
<dbReference type="SUPFAM" id="SSF54637">
    <property type="entry name" value="Thioesterase/thiol ester dehydrase-isomerase"/>
    <property type="match status" value="1"/>
</dbReference>
<sequence length="144" mass="15790">MEKFLDINEIKRIIPHRYPFLLVDKITELEEGKSAVGYKNVTVNEYFFNGHFPEEPVMPGVLIIEALAQVGAVAILSKEEFKGKIAYFGGINKAKFRKKVVPGDELKLSIELTKIKGVAGVGKAVATVDGKVAAEAELLFVIGK</sequence>
<name>FABZ_CLOBK</name>
<evidence type="ECO:0000255" key="1">
    <source>
        <dbReference type="HAMAP-Rule" id="MF_00406"/>
    </source>
</evidence>
<feature type="chain" id="PRO_0000340770" description="3-hydroxyacyl-[acyl-carrier-protein] dehydratase FabZ">
    <location>
        <begin position="1"/>
        <end position="144"/>
    </location>
</feature>
<feature type="active site" evidence="1">
    <location>
        <position position="51"/>
    </location>
</feature>
<reference key="1">
    <citation type="journal article" date="2007" name="PLoS ONE">
        <title>Analysis of the neurotoxin complex genes in Clostridium botulinum A1-A4 and B1 strains: BoNT/A3, /Ba4 and /B1 clusters are located within plasmids.</title>
        <authorList>
            <person name="Smith T.J."/>
            <person name="Hill K.K."/>
            <person name="Foley B.T."/>
            <person name="Detter J.C."/>
            <person name="Munk A.C."/>
            <person name="Bruce D.C."/>
            <person name="Doggett N.A."/>
            <person name="Smith L.A."/>
            <person name="Marks J.D."/>
            <person name="Xie G."/>
            <person name="Brettin T.S."/>
        </authorList>
    </citation>
    <scope>NUCLEOTIDE SEQUENCE [LARGE SCALE GENOMIC DNA]</scope>
    <source>
        <strain>Okra / Type B1</strain>
    </source>
</reference>
<protein>
    <recommendedName>
        <fullName evidence="1">3-hydroxyacyl-[acyl-carrier-protein] dehydratase FabZ</fullName>
        <ecNumber evidence="1">4.2.1.59</ecNumber>
    </recommendedName>
    <alternativeName>
        <fullName evidence="1">(3R)-hydroxymyristoyl-[acyl-carrier-protein] dehydratase</fullName>
        <shortName evidence="1">(3R)-hydroxymyristoyl-ACP dehydrase</shortName>
    </alternativeName>
    <alternativeName>
        <fullName evidence="1">Beta-hydroxyacyl-ACP dehydratase</fullName>
    </alternativeName>
</protein>
<keyword id="KW-0963">Cytoplasm</keyword>
<keyword id="KW-0441">Lipid A biosynthesis</keyword>
<keyword id="KW-0444">Lipid biosynthesis</keyword>
<keyword id="KW-0443">Lipid metabolism</keyword>
<keyword id="KW-0456">Lyase</keyword>
<gene>
    <name evidence="1" type="primary">fabZ</name>
    <name type="ordered locus">CLD_0889</name>
</gene>